<comment type="function">
    <text evidence="2">One of the minor capsid proteins that constitute a network internal to the major capsid proteins and outside the lipid membrane (PubMed:30674888). The minor capsid proteins glue and stabilize the capsomers (PubMed:30674888).</text>
</comment>
<comment type="subunit">
    <text evidence="2">Interacts with the major capsid protein.</text>
</comment>
<comment type="subcellular location">
    <subcellularLocation>
        <location evidence="2">Virion</location>
    </subcellularLocation>
</comment>
<comment type="induction">
    <text evidence="1">Expressed in the late phase of the viral replicative cycle.</text>
</comment>
<keyword id="KW-0002">3D-structure</keyword>
<keyword id="KW-0167">Capsid protein</keyword>
<keyword id="KW-0426">Late protein</keyword>
<keyword id="KW-1185">Reference proteome</keyword>
<keyword id="KW-0946">Virion</keyword>
<evidence type="ECO:0000269" key="1">
    <source>
    </source>
</evidence>
<evidence type="ECO:0000269" key="2">
    <source>
    </source>
</evidence>
<evidence type="ECO:0000303" key="3">
    <source>
    </source>
</evidence>
<evidence type="ECO:0000312" key="4">
    <source>
        <dbReference type="EMBL" id="AAC96890.1"/>
    </source>
</evidence>
<evidence type="ECO:0000312" key="5">
    <source>
        <dbReference type="Proteomes" id="UP000000862"/>
    </source>
</evidence>
<evidence type="ECO:0007744" key="6">
    <source>
        <dbReference type="PDB" id="6NCL"/>
    </source>
</evidence>
<evidence type="ECO:0007744" key="7">
    <source>
        <dbReference type="PDB" id="8H2I"/>
    </source>
</evidence>
<gene>
    <name evidence="4" type="primary">A523R</name>
</gene>
<protein>
    <recommendedName>
        <fullName>Minor capsid protein 3</fullName>
    </recommendedName>
    <alternativeName>
        <fullName evidence="3">Minor capsid protein Vp20.5</fullName>
    </alternativeName>
</protein>
<organismHost>
    <name type="scientific">Chlorella</name>
    <dbReference type="NCBI Taxonomy" id="3071"/>
</organismHost>
<accession>Q98573</accession>
<name>P3_PBCV1</name>
<proteinExistence type="evidence at protein level"/>
<reference key="1">
    <citation type="journal article" date="1996" name="Virology">
        <title>Analysis of 76 kb of the chlorella virus PBCV-1 330-kb genome: map positions 182 to 258.</title>
        <authorList>
            <person name="Kutish G.F."/>
            <person name="Li Y."/>
            <person name="Lu Z."/>
            <person name="Furuta M."/>
            <person name="Rock D.L."/>
            <person name="van Etten J.L."/>
        </authorList>
    </citation>
    <scope>NUCLEOTIDE SEQUENCE [LARGE SCALE GENOMIC DNA]</scope>
</reference>
<reference key="2">
    <citation type="journal article" date="2010" name="J. Virol.">
        <title>Microarray analysis of Paramecium bursaria chlorella virus 1 transcription.</title>
        <authorList>
            <person name="Yanai-Balser G.M."/>
            <person name="Duncan G.A."/>
            <person name="Eudy J.D."/>
            <person name="Wang D."/>
            <person name="Li X."/>
            <person name="Agarkova I.V."/>
            <person name="Dunigan D.D."/>
            <person name="Van Etten J.L."/>
        </authorList>
    </citation>
    <scope>INDUCTION</scope>
</reference>
<reference key="3">
    <citation type="journal article" date="1997" name="Virology">
        <title>Proteolytic processing of Chlorella virus CVK2 capsid proteins.</title>
        <authorList>
            <person name="Songsri P."/>
            <person name="Hiramatsu S."/>
            <person name="Fujie M."/>
            <person name="Yamada T."/>
        </authorList>
    </citation>
    <scope>FUNCTION</scope>
    <scope>SUBCELLULAR LOCATION</scope>
    <scope>IDENTIFICATION</scope>
    <source>
        <strain>K2</strain>
    </source>
</reference>
<reference evidence="6" key="4">
    <citation type="journal article" date="2019" name="Nat. Commun.">
        <title>Near-atomic structure of a giant virus.</title>
        <authorList>
            <person name="Fang Q."/>
            <person name="Zhu D."/>
            <person name="Agarkova I."/>
            <person name="Adhikari J."/>
            <person name="Klose T."/>
            <person name="Liu Y."/>
            <person name="Chen Z."/>
            <person name="Sun Y."/>
            <person name="Gross M.L."/>
            <person name="Van Etten J.L."/>
            <person name="Zhang X."/>
            <person name="Rossmann M.G."/>
        </authorList>
    </citation>
    <scope>STRUCTURE BY ELECTRON MICROSCOPY (3.50 ANGSTROMS)</scope>
    <scope>FUNCTION</scope>
    <scope>SUBCELLULAR LOCATION</scope>
    <scope>INTERACTION WITH THE MAJOR CAPSID PROTEIN</scope>
</reference>
<reference evidence="7" key="5">
    <citation type="journal article" date="2022" name="Nat. Commun.">
        <title>Near-atomic, non-icosahedrally averaged structure of giant virus Paramecium bursaria chlorella virus 1.</title>
        <authorList>
            <person name="Shao Q."/>
            <person name="Agarkova I.V."/>
            <person name="Noel E.A."/>
            <person name="Dunigan D.D."/>
            <person name="Liu Y."/>
            <person name="Wang A."/>
            <person name="Guo M."/>
            <person name="Xie L."/>
            <person name="Zhao X."/>
            <person name="Rossmann M.G."/>
            <person name="Van Etten J.L."/>
            <person name="Klose T."/>
            <person name="Fang Q."/>
        </authorList>
    </citation>
    <scope>STRUCTURE BY ELECTRON MICROSCOPY (3.80 ANGSTROMS)</scope>
</reference>
<sequence>MAMKTQRKENVLFQNVKPREIPLVDNPFSTYPYKHVITETQPTQAKNQAIWGLVQMGLSGEAAAMYGDVVVQKTTRACRKSEGGFKDVNTELWGTSPYLGRGDGEVYNMPASNQLLRGFESSLRGSRVRTQIDDKSFIPYTWQMIDVPLAAAKTSFIAGLDTRQQLAYGNP</sequence>
<organism evidence="4 5">
    <name type="scientific">Paramecium bursaria Chlorella virus 1</name>
    <name type="common">PBCV-1</name>
    <dbReference type="NCBI Taxonomy" id="10506"/>
    <lineage>
        <taxon>Viruses</taxon>
        <taxon>Varidnaviria</taxon>
        <taxon>Bamfordvirae</taxon>
        <taxon>Nucleocytoviricota</taxon>
        <taxon>Megaviricetes</taxon>
        <taxon>Algavirales</taxon>
        <taxon>Phycodnaviridae</taxon>
        <taxon>Chlorovirus</taxon>
    </lineage>
</organism>
<feature type="chain" id="PRO_0000460569" description="Minor capsid protein 3">
    <location>
        <begin position="1"/>
        <end position="171"/>
    </location>
</feature>
<dbReference type="EMBL" id="JF411744">
    <property type="protein sequence ID" value="AAC96890.1"/>
    <property type="molecule type" value="Genomic_DNA"/>
</dbReference>
<dbReference type="PIR" id="T18025">
    <property type="entry name" value="T18025"/>
</dbReference>
<dbReference type="RefSeq" id="NP_048879.1">
    <property type="nucleotide sequence ID" value="NC_000852.5"/>
</dbReference>
<dbReference type="PDB" id="6NCL">
    <property type="method" value="EM"/>
    <property type="resolution" value="3.50 A"/>
    <property type="chains" value="c6/c7/c8=1-171"/>
</dbReference>
<dbReference type="PDB" id="8H2I">
    <property type="method" value="EM"/>
    <property type="resolution" value="3.80 A"/>
    <property type="chains" value="bI/bJ/bK=1-171"/>
</dbReference>
<dbReference type="PDBsum" id="6NCL"/>
<dbReference type="PDBsum" id="8H2I"/>
<dbReference type="EMDB" id="EMD-0436"/>
<dbReference type="EMDB" id="EMD-34438"/>
<dbReference type="GeneID" id="918414"/>
<dbReference type="KEGG" id="vg:918414"/>
<dbReference type="OrthoDB" id="12265at10239"/>
<dbReference type="Proteomes" id="UP000000862">
    <property type="component" value="Genome"/>
</dbReference>
<dbReference type="GO" id="GO:0019028">
    <property type="term" value="C:viral capsid"/>
    <property type="evidence" value="ECO:0007669"/>
    <property type="project" value="UniProtKB-KW"/>
</dbReference>